<protein>
    <recommendedName>
        <fullName evidence="1">UPF0473 protein LAF_0524</fullName>
    </recommendedName>
</protein>
<proteinExistence type="inferred from homology"/>
<gene>
    <name type="ordered locus">LAF_0524</name>
</gene>
<organism>
    <name type="scientific">Limosilactobacillus fermentum (strain NBRC 3956 / LMG 18251)</name>
    <name type="common">Lactobacillus fermentum</name>
    <dbReference type="NCBI Taxonomy" id="334390"/>
    <lineage>
        <taxon>Bacteria</taxon>
        <taxon>Bacillati</taxon>
        <taxon>Bacillota</taxon>
        <taxon>Bacilli</taxon>
        <taxon>Lactobacillales</taxon>
        <taxon>Lactobacillaceae</taxon>
        <taxon>Limosilactobacillus</taxon>
    </lineage>
</organism>
<evidence type="ECO:0000255" key="1">
    <source>
        <dbReference type="HAMAP-Rule" id="MF_01448"/>
    </source>
</evidence>
<dbReference type="EMBL" id="AP008937">
    <property type="protein sequence ID" value="BAG26860.1"/>
    <property type="molecule type" value="Genomic_DNA"/>
</dbReference>
<dbReference type="RefSeq" id="WP_003682834.1">
    <property type="nucleotide sequence ID" value="NC_010610.1"/>
</dbReference>
<dbReference type="KEGG" id="lfe:LAF_0524"/>
<dbReference type="eggNOG" id="COG3906">
    <property type="taxonomic scope" value="Bacteria"/>
</dbReference>
<dbReference type="HOGENOM" id="CLU_146610_2_1_9"/>
<dbReference type="Proteomes" id="UP000001697">
    <property type="component" value="Chromosome"/>
</dbReference>
<dbReference type="HAMAP" id="MF_01448">
    <property type="entry name" value="UPF0473"/>
    <property type="match status" value="1"/>
</dbReference>
<dbReference type="InterPro" id="IPR009711">
    <property type="entry name" value="UPF0473"/>
</dbReference>
<dbReference type="NCBIfam" id="NF010217">
    <property type="entry name" value="PRK13678.1-4"/>
    <property type="match status" value="1"/>
</dbReference>
<dbReference type="PANTHER" id="PTHR40066">
    <property type="entry name" value="UPF0473 PROTEIN CBO2561/CLC_2432"/>
    <property type="match status" value="1"/>
</dbReference>
<dbReference type="PANTHER" id="PTHR40066:SF1">
    <property type="entry name" value="UPF0473 PROTEIN CBO2561_CLC_2432"/>
    <property type="match status" value="1"/>
</dbReference>
<dbReference type="Pfam" id="PF06949">
    <property type="entry name" value="DUF1292"/>
    <property type="match status" value="1"/>
</dbReference>
<reference key="1">
    <citation type="journal article" date="2008" name="DNA Res.">
        <title>Comparative genome analysis of Lactobacillus reuteri and Lactobacillus fermentum reveal a genomic island for reuterin and cobalamin production.</title>
        <authorList>
            <person name="Morita H."/>
            <person name="Toh H."/>
            <person name="Fukuda S."/>
            <person name="Horikawa H."/>
            <person name="Oshima K."/>
            <person name="Suzuki T."/>
            <person name="Murakami M."/>
            <person name="Hisamatsu S."/>
            <person name="Kato Y."/>
            <person name="Takizawa T."/>
            <person name="Fukuoka H."/>
            <person name="Yoshimura T."/>
            <person name="Itoh K."/>
            <person name="O'Sullivan D.J."/>
            <person name="McKay L.L."/>
            <person name="Ohno H."/>
            <person name="Kikuchi J."/>
            <person name="Masaoka T."/>
            <person name="Hattori M."/>
        </authorList>
    </citation>
    <scope>NUCLEOTIDE SEQUENCE [LARGE SCALE GENOMIC DNA]</scope>
    <source>
        <strain>NBRC 3956 / LMG 18251</strain>
    </source>
</reference>
<sequence length="101" mass="11720">MSEQTPRDDGEIFTLVDEAGNEELYKEAMRFQSPETGKWYICLYPLDEENDEEVGIQAFAFEEPTSEEDELELLPIENDAEWEMVQEVLNTFIDDDGNFNA</sequence>
<comment type="similarity">
    <text evidence="1">Belongs to the UPF0473 family.</text>
</comment>
<name>Y524_LIMF3</name>
<keyword id="KW-1185">Reference proteome</keyword>
<feature type="chain" id="PRO_1000200979" description="UPF0473 protein LAF_0524">
    <location>
        <begin position="1"/>
        <end position="101"/>
    </location>
</feature>
<accession>B2GB28</accession>